<feature type="chain" id="PRO_1000083224" description="Probable glycine dehydrogenase (decarboxylating) subunit 1">
    <location>
        <begin position="1"/>
        <end position="454"/>
    </location>
</feature>
<dbReference type="EC" id="1.4.4.2" evidence="1"/>
<dbReference type="EMBL" id="AM746676">
    <property type="protein sequence ID" value="CAN92171.1"/>
    <property type="molecule type" value="Genomic_DNA"/>
</dbReference>
<dbReference type="RefSeq" id="WP_012234647.1">
    <property type="nucleotide sequence ID" value="NC_010162.1"/>
</dbReference>
<dbReference type="SMR" id="A9FQM4"/>
<dbReference type="STRING" id="448385.sce2012"/>
<dbReference type="KEGG" id="scl:sce2012"/>
<dbReference type="eggNOG" id="COG0403">
    <property type="taxonomic scope" value="Bacteria"/>
</dbReference>
<dbReference type="HOGENOM" id="CLU_004620_0_2_7"/>
<dbReference type="OrthoDB" id="9801272at2"/>
<dbReference type="BioCyc" id="SCEL448385:SCE_RS10325-MONOMER"/>
<dbReference type="Proteomes" id="UP000002139">
    <property type="component" value="Chromosome"/>
</dbReference>
<dbReference type="GO" id="GO:0004375">
    <property type="term" value="F:glycine dehydrogenase (decarboxylating) activity"/>
    <property type="evidence" value="ECO:0007669"/>
    <property type="project" value="UniProtKB-EC"/>
</dbReference>
<dbReference type="GO" id="GO:0019464">
    <property type="term" value="P:glycine decarboxylation via glycine cleavage system"/>
    <property type="evidence" value="ECO:0007669"/>
    <property type="project" value="UniProtKB-UniRule"/>
</dbReference>
<dbReference type="GO" id="GO:0009116">
    <property type="term" value="P:nucleoside metabolic process"/>
    <property type="evidence" value="ECO:0007669"/>
    <property type="project" value="InterPro"/>
</dbReference>
<dbReference type="CDD" id="cd00613">
    <property type="entry name" value="GDC-P"/>
    <property type="match status" value="1"/>
</dbReference>
<dbReference type="Gene3D" id="3.90.1150.10">
    <property type="entry name" value="Aspartate Aminotransferase, domain 1"/>
    <property type="match status" value="1"/>
</dbReference>
<dbReference type="Gene3D" id="3.40.640.10">
    <property type="entry name" value="Type I PLP-dependent aspartate aminotransferase-like (Major domain)"/>
    <property type="match status" value="1"/>
</dbReference>
<dbReference type="HAMAP" id="MF_00712">
    <property type="entry name" value="GcvPA"/>
    <property type="match status" value="1"/>
</dbReference>
<dbReference type="InterPro" id="IPR023010">
    <property type="entry name" value="GcvPA"/>
</dbReference>
<dbReference type="InterPro" id="IPR049315">
    <property type="entry name" value="GDC-P_N"/>
</dbReference>
<dbReference type="InterPro" id="IPR020581">
    <property type="entry name" value="GDC_P"/>
</dbReference>
<dbReference type="InterPro" id="IPR015424">
    <property type="entry name" value="PyrdxlP-dep_Trfase"/>
</dbReference>
<dbReference type="InterPro" id="IPR015421">
    <property type="entry name" value="PyrdxlP-dep_Trfase_major"/>
</dbReference>
<dbReference type="InterPro" id="IPR015422">
    <property type="entry name" value="PyrdxlP-dep_Trfase_small"/>
</dbReference>
<dbReference type="NCBIfam" id="NF001696">
    <property type="entry name" value="PRK00451.1"/>
    <property type="match status" value="1"/>
</dbReference>
<dbReference type="PANTHER" id="PTHR42806">
    <property type="entry name" value="GLYCINE CLEAVAGE SYSTEM P-PROTEIN"/>
    <property type="match status" value="1"/>
</dbReference>
<dbReference type="PANTHER" id="PTHR42806:SF1">
    <property type="entry name" value="GLYCINE DEHYDROGENASE (DECARBOXYLATING)"/>
    <property type="match status" value="1"/>
</dbReference>
<dbReference type="Pfam" id="PF02347">
    <property type="entry name" value="GDC-P"/>
    <property type="match status" value="1"/>
</dbReference>
<dbReference type="PIRSF" id="PIRSF006815">
    <property type="entry name" value="GcvPA"/>
    <property type="match status" value="1"/>
</dbReference>
<dbReference type="SUPFAM" id="SSF53383">
    <property type="entry name" value="PLP-dependent transferases"/>
    <property type="match status" value="1"/>
</dbReference>
<name>GCSPA_SORC5</name>
<reference key="1">
    <citation type="journal article" date="2007" name="Nat. Biotechnol.">
        <title>Complete genome sequence of the myxobacterium Sorangium cellulosum.</title>
        <authorList>
            <person name="Schneiker S."/>
            <person name="Perlova O."/>
            <person name="Kaiser O."/>
            <person name="Gerth K."/>
            <person name="Alici A."/>
            <person name="Altmeyer M.O."/>
            <person name="Bartels D."/>
            <person name="Bekel T."/>
            <person name="Beyer S."/>
            <person name="Bode E."/>
            <person name="Bode H.B."/>
            <person name="Bolten C.J."/>
            <person name="Choudhuri J.V."/>
            <person name="Doss S."/>
            <person name="Elnakady Y.A."/>
            <person name="Frank B."/>
            <person name="Gaigalat L."/>
            <person name="Goesmann A."/>
            <person name="Groeger C."/>
            <person name="Gross F."/>
            <person name="Jelsbak L."/>
            <person name="Jelsbak L."/>
            <person name="Kalinowski J."/>
            <person name="Kegler C."/>
            <person name="Knauber T."/>
            <person name="Konietzny S."/>
            <person name="Kopp M."/>
            <person name="Krause L."/>
            <person name="Krug D."/>
            <person name="Linke B."/>
            <person name="Mahmud T."/>
            <person name="Martinez-Arias R."/>
            <person name="McHardy A.C."/>
            <person name="Merai M."/>
            <person name="Meyer F."/>
            <person name="Mormann S."/>
            <person name="Munoz-Dorado J."/>
            <person name="Perez J."/>
            <person name="Pradella S."/>
            <person name="Rachid S."/>
            <person name="Raddatz G."/>
            <person name="Rosenau F."/>
            <person name="Rueckert C."/>
            <person name="Sasse F."/>
            <person name="Scharfe M."/>
            <person name="Schuster S.C."/>
            <person name="Suen G."/>
            <person name="Treuner-Lange A."/>
            <person name="Velicer G.J."/>
            <person name="Vorholter F.-J."/>
            <person name="Weissman K.J."/>
            <person name="Welch R.D."/>
            <person name="Wenzel S.C."/>
            <person name="Whitworth D.E."/>
            <person name="Wilhelm S."/>
            <person name="Wittmann C."/>
            <person name="Bloecker H."/>
            <person name="Puehler A."/>
            <person name="Mueller R."/>
        </authorList>
    </citation>
    <scope>NUCLEOTIDE SEQUENCE [LARGE SCALE GENOMIC DNA]</scope>
    <source>
        <strain>So ce56</strain>
    </source>
</reference>
<proteinExistence type="inferred from homology"/>
<gene>
    <name evidence="1" type="primary">gcvPA</name>
    <name type="ordered locus">sce2012</name>
</gene>
<evidence type="ECO:0000255" key="1">
    <source>
        <dbReference type="HAMAP-Rule" id="MF_00712"/>
    </source>
</evidence>
<comment type="function">
    <text evidence="1">The glycine cleavage system catalyzes the degradation of glycine. The P protein binds the alpha-amino group of glycine through its pyridoxal phosphate cofactor; CO(2) is released and the remaining methylamine moiety is then transferred to the lipoamide cofactor of the H protein.</text>
</comment>
<comment type="catalytic activity">
    <reaction evidence="1">
        <text>N(6)-[(R)-lipoyl]-L-lysyl-[glycine-cleavage complex H protein] + glycine + H(+) = N(6)-[(R)-S(8)-aminomethyldihydrolipoyl]-L-lysyl-[glycine-cleavage complex H protein] + CO2</text>
        <dbReference type="Rhea" id="RHEA:24304"/>
        <dbReference type="Rhea" id="RHEA-COMP:10494"/>
        <dbReference type="Rhea" id="RHEA-COMP:10495"/>
        <dbReference type="ChEBI" id="CHEBI:15378"/>
        <dbReference type="ChEBI" id="CHEBI:16526"/>
        <dbReference type="ChEBI" id="CHEBI:57305"/>
        <dbReference type="ChEBI" id="CHEBI:83099"/>
        <dbReference type="ChEBI" id="CHEBI:83143"/>
        <dbReference type="EC" id="1.4.4.2"/>
    </reaction>
</comment>
<comment type="subunit">
    <text evidence="1">The glycine cleavage system is composed of four proteins: P, T, L and H. In this organism, the P 'protein' is a heterodimer of two subunits.</text>
</comment>
<comment type="similarity">
    <text evidence="1">Belongs to the GcvP family. N-terminal subunit subfamily.</text>
</comment>
<organism>
    <name type="scientific">Sorangium cellulosum (strain So ce56)</name>
    <name type="common">Polyangium cellulosum (strain So ce56)</name>
    <dbReference type="NCBI Taxonomy" id="448385"/>
    <lineage>
        <taxon>Bacteria</taxon>
        <taxon>Pseudomonadati</taxon>
        <taxon>Myxococcota</taxon>
        <taxon>Polyangia</taxon>
        <taxon>Polyangiales</taxon>
        <taxon>Polyangiaceae</taxon>
        <taxon>Sorangium</taxon>
    </lineage>
</organism>
<sequence length="454" mass="49092">MRYLPHTPEEISEMLQAVGLSSLEELYSAIPKEARLTRPLSMEPSLDEASLMRHLEELAQKNRAGRMLSFLGAGAYEHHFPPAADQLLLRSEFYTAYTPYQPEVSQGTLQVIFEFQTIVSEILGLPIANASMYDGASALAEAVLMARRLTGRERTVLSGGVHPDYIGTVETYVHGIGAGKASLVGVDVGRDGTADVEALTRAIDETTACVVVGYPNFFGVVGDIRKVAEVCHQKGALLITVTLDPYALALLESPGALGADIAVAEGQPLGLPPQYGGPNVGLFACRNDRKYLQQVPGRLVGETVDKHGTRGYVLTLATREQHIRRERATSNICTNSGLCATAVTMRMCMLGKRGFVEAAKQCLAKAEHLKREIARLEGYSLPMSAPTFHEFVVKVRGGDAGKLTRALAEQGIIAGLDLGRIDARRRDELLVAVTERHSRADLDRLVAGLAGFTP</sequence>
<keyword id="KW-0560">Oxidoreductase</keyword>
<keyword id="KW-1185">Reference proteome</keyword>
<protein>
    <recommendedName>
        <fullName evidence="1">Probable glycine dehydrogenase (decarboxylating) subunit 1</fullName>
        <ecNumber evidence="1">1.4.4.2</ecNumber>
    </recommendedName>
    <alternativeName>
        <fullName evidence="1">Glycine cleavage system P-protein subunit 1</fullName>
    </alternativeName>
    <alternativeName>
        <fullName evidence="1">Glycine decarboxylase subunit 1</fullName>
    </alternativeName>
    <alternativeName>
        <fullName evidence="1">Glycine dehydrogenase (aminomethyl-transferring) subunit 1</fullName>
    </alternativeName>
</protein>
<accession>A9FQM4</accession>